<protein>
    <recommendedName>
        <fullName evidence="7">L-tyrosine C(3)-methyltransferase</fullName>
        <ecNumber evidence="6">2.1.1.304</ecNumber>
    </recommendedName>
</protein>
<reference key="1">
    <citation type="journal article" date="2008" name="J. Bacteriol.">
        <title>Characterization of the saframycin A gene cluster from Streptomyces lavendulae NRRL 11002 revealing a nonribosomal peptide synthetase system for assembling the unusual tetrapeptidyl skeleton in an iterative manner.</title>
        <authorList>
            <person name="Li L."/>
            <person name="Deng W."/>
            <person name="Song J."/>
            <person name="Ding W."/>
            <person name="Zhao Q.F."/>
            <person name="Peng C."/>
            <person name="Song W.W."/>
            <person name="Tang G.L."/>
            <person name="Liu W."/>
        </authorList>
    </citation>
    <scope>NUCLEOTIDE SEQUENCE [GENOMIC DNA]</scope>
    <source>
        <strain evidence="8">NRRL 11002</strain>
    </source>
</reference>
<reference key="2">
    <citation type="journal article" date="2009" name="J. Microbiol. Biotechnol.">
        <title>Biosynthesis of 3-hydroxy-5-methyl-o-methyltyrosine in the saframycin/ safracin biosynthetic pathway.</title>
        <authorList>
            <person name="Fu C.Y."/>
            <person name="Tang M.C."/>
            <person name="Peng C."/>
            <person name="Li L."/>
            <person name="He Y.L."/>
            <person name="Liu W."/>
            <person name="Tang G.L."/>
        </authorList>
    </citation>
    <scope>FUNCTION</scope>
    <scope>PATHWAY</scope>
</reference>
<reference key="3">
    <citation type="journal article" date="2012" name="J. Biol. Chem.">
        <title>Characterization of SfmD as a heme peroxidase that catalyzes the regioselective hydroxylation of 3-methyltyrosine to 3-hydroxy-5-methyltyrosine in saframycin A biosynthesis.</title>
        <authorList>
            <person name="Tang M.C."/>
            <person name="Fu C.Y."/>
            <person name="Tang G.L."/>
        </authorList>
    </citation>
    <scope>FUNCTION</scope>
    <scope>PATHWAY</scope>
    <scope>CATALYTIC ACTIVITY</scope>
</reference>
<dbReference type="EC" id="2.1.1.304" evidence="6"/>
<dbReference type="EMBL" id="DQ838002">
    <property type="protein sequence ID" value="ABI22137.1"/>
    <property type="molecule type" value="Genomic_DNA"/>
</dbReference>
<dbReference type="SMR" id="B0CN31"/>
<dbReference type="KEGG" id="ag:ABI22137"/>
<dbReference type="BioCyc" id="MetaCyc:MONOMER-19336"/>
<dbReference type="BRENDA" id="2.1.1.304">
    <property type="organism ID" value="133"/>
</dbReference>
<dbReference type="GO" id="GO:0008171">
    <property type="term" value="F:O-methyltransferase activity"/>
    <property type="evidence" value="ECO:0007669"/>
    <property type="project" value="InterPro"/>
</dbReference>
<dbReference type="GO" id="GO:0046983">
    <property type="term" value="F:protein dimerization activity"/>
    <property type="evidence" value="ECO:0007669"/>
    <property type="project" value="InterPro"/>
</dbReference>
<dbReference type="GO" id="GO:0017000">
    <property type="term" value="P:antibiotic biosynthetic process"/>
    <property type="evidence" value="ECO:0007669"/>
    <property type="project" value="UniProtKB-KW"/>
</dbReference>
<dbReference type="GO" id="GO:0032259">
    <property type="term" value="P:methylation"/>
    <property type="evidence" value="ECO:0007669"/>
    <property type="project" value="UniProtKB-KW"/>
</dbReference>
<dbReference type="CDD" id="cd02440">
    <property type="entry name" value="AdoMet_MTases"/>
    <property type="match status" value="1"/>
</dbReference>
<dbReference type="Gene3D" id="1.20.58.1390">
    <property type="match status" value="1"/>
</dbReference>
<dbReference type="Gene3D" id="3.40.50.150">
    <property type="entry name" value="Vaccinia Virus protein VP39"/>
    <property type="match status" value="1"/>
</dbReference>
<dbReference type="Gene3D" id="1.10.10.10">
    <property type="entry name" value="Winged helix-like DNA-binding domain superfamily/Winged helix DNA-binding domain"/>
    <property type="match status" value="1"/>
</dbReference>
<dbReference type="InterPro" id="IPR016461">
    <property type="entry name" value="COMT-like"/>
</dbReference>
<dbReference type="InterPro" id="IPR001077">
    <property type="entry name" value="O_MeTrfase_dom"/>
</dbReference>
<dbReference type="InterPro" id="IPR012967">
    <property type="entry name" value="Plant_O-MeTrfase_dimerisation"/>
</dbReference>
<dbReference type="InterPro" id="IPR029063">
    <property type="entry name" value="SAM-dependent_MTases_sf"/>
</dbReference>
<dbReference type="InterPro" id="IPR036388">
    <property type="entry name" value="WH-like_DNA-bd_sf"/>
</dbReference>
<dbReference type="PANTHER" id="PTHR11746">
    <property type="entry name" value="O-METHYLTRANSFERASE"/>
    <property type="match status" value="1"/>
</dbReference>
<dbReference type="Pfam" id="PF08100">
    <property type="entry name" value="Dimerisation"/>
    <property type="match status" value="1"/>
</dbReference>
<dbReference type="Pfam" id="PF00891">
    <property type="entry name" value="Methyltransf_2"/>
    <property type="match status" value="1"/>
</dbReference>
<dbReference type="PIRSF" id="PIRSF005739">
    <property type="entry name" value="O-mtase"/>
    <property type="match status" value="1"/>
</dbReference>
<dbReference type="SUPFAM" id="SSF53335">
    <property type="entry name" value="S-adenosyl-L-methionine-dependent methyltransferases"/>
    <property type="match status" value="1"/>
</dbReference>
<dbReference type="PROSITE" id="PS51683">
    <property type="entry name" value="SAM_OMT_II"/>
    <property type="match status" value="1"/>
</dbReference>
<name>SFMM2_STRLA</name>
<proteinExistence type="evidence at protein level"/>
<organism evidence="8">
    <name type="scientific">Streptomyces lavendulae</name>
    <dbReference type="NCBI Taxonomy" id="1914"/>
    <lineage>
        <taxon>Bacteria</taxon>
        <taxon>Bacillati</taxon>
        <taxon>Actinomycetota</taxon>
        <taxon>Actinomycetes</taxon>
        <taxon>Kitasatosporales</taxon>
        <taxon>Streptomycetaceae</taxon>
        <taxon>Streptomyces</taxon>
    </lineage>
</organism>
<gene>
    <name evidence="5" type="primary">sfmM2</name>
</gene>
<evidence type="ECO:0000255" key="1">
    <source>
        <dbReference type="PROSITE-ProRule" id="PRU01020"/>
    </source>
</evidence>
<evidence type="ECO:0000256" key="2">
    <source>
        <dbReference type="SAM" id="MobiDB-lite"/>
    </source>
</evidence>
<evidence type="ECO:0000269" key="3">
    <source>
    </source>
</evidence>
<evidence type="ECO:0000269" key="4">
    <source>
    </source>
</evidence>
<evidence type="ECO:0000303" key="5">
    <source>
    </source>
</evidence>
<evidence type="ECO:0000303" key="6">
    <source>
    </source>
</evidence>
<evidence type="ECO:0000305" key="7"/>
<evidence type="ECO:0000312" key="8">
    <source>
        <dbReference type="EMBL" id="ABI22137.1"/>
    </source>
</evidence>
<sequence>MTISLENTTVGQNPAGGPPTGKAPLDMEGLAWILFGASAFQYLNAACELNLFELLENKPGLTKPQIGAELGLADRANDILLLGATATGMLTVEDGRYQLATVLAELLKTDDWQRFKDTVGFEQYVCYEGQIDFTESLRSNSNVGLRRVRGSGRDLYHRLHENPQMEQAFYKYMRSWSELANQHLVEVLDLSGTSKLLDCGGGDAVNSIALAQANPHIEAGILEIPPTAPLTEKKIAEAGLSDRITVKPGDMHTDEFPTGYDTVMFAHQLVIWTPEENTALLRKAYNALPEGGRVIIFNSMSNDEGDGPVVAALDSVYFAALPAEGGMIYSWATYEESLTKAGFNPETFQRIDFPGWTPHGVIIATK</sequence>
<feature type="chain" id="PRO_0000430696" description="L-tyrosine C(3)-methyltransferase">
    <location>
        <begin position="1"/>
        <end position="366"/>
    </location>
</feature>
<feature type="region of interest" description="Disordered" evidence="2">
    <location>
        <begin position="1"/>
        <end position="22"/>
    </location>
</feature>
<feature type="compositionally biased region" description="Polar residues" evidence="2">
    <location>
        <begin position="1"/>
        <end position="12"/>
    </location>
</feature>
<feature type="binding site" evidence="1">
    <location>
        <position position="223"/>
    </location>
    <ligand>
        <name>S-adenosyl-L-methionine</name>
        <dbReference type="ChEBI" id="CHEBI:59789"/>
    </ligand>
</feature>
<keyword id="KW-0045">Antibiotic biosynthesis</keyword>
<keyword id="KW-0489">Methyltransferase</keyword>
<keyword id="KW-0949">S-adenosyl-L-methionine</keyword>
<keyword id="KW-0808">Transferase</keyword>
<comment type="function">
    <text evidence="3 4">C-methyltransferase that mediates the methylation of tyrosine into 3-methyl-L-tyrosine (3-Me-Tyr) in biosynthesis of saframycin A, a potent antitumor antibiotic that belongs to the tetrahydroisoquinoline family. Involved in biosynthesis of 3-hydroxy-5-methyl-O-methyltyrosine (3-OH-5-Me-OMe-Tyr), a core structure of saframycin A.</text>
</comment>
<comment type="catalytic activity">
    <reaction evidence="6">
        <text>L-tyrosine + S-adenosyl-L-methionine = 3-methyl-L-tyrosine + S-adenosyl-L-homocysteine + H(+)</text>
        <dbReference type="Rhea" id="RHEA:41428"/>
        <dbReference type="ChEBI" id="CHEBI:15378"/>
        <dbReference type="ChEBI" id="CHEBI:57856"/>
        <dbReference type="ChEBI" id="CHEBI:58315"/>
        <dbReference type="ChEBI" id="CHEBI:59789"/>
        <dbReference type="ChEBI" id="CHEBI:78239"/>
        <dbReference type="EC" id="2.1.1.304"/>
    </reaction>
</comment>
<comment type="pathway">
    <text evidence="3 4">Antibiotic biosynthesis.</text>
</comment>
<comment type="similarity">
    <text evidence="1">Belongs to the class I-like SAM-binding methyltransferase superfamily. Cation-independent O-methyltransferase family.</text>
</comment>
<accession>B0CN31</accession>